<sequence>MTRYIFITGGVVSSLGKGITSASLGAILEAQGLTVTLLKLDPYINVDPGTMSPFQHGEVFVTEDGAETDLDLGHYERFVNATMTRKNNFTTGRVYADVIRKERRGDYLGGTIQVIPHITDEIKAKIREGADGADVALVEVGGTVGDIESLPFLEAIRQMRIELGDQQTLFIHLTLVPYVAVAGEIKTKPTQHSVKELRSIGIQPDILVCRSEQSLPDAERAKIALFTNVPEPSVISLSDVKSIYEIPLILRDQGLGNRVCEKLNIKATAADLDDWKKVVQAQKNPRHTVTVAVVGKYVDLEDSYKSLSEALIHAGIHTQTRVVIEYIDSEAIELHGTELLKKVDAILVPGGFGSRGIEGKILAAQYARENGIPYFGICLGMQIAIIEFARDKAQMENANSTEFDPKTPFPVVALVSEWMAKEGIIEKRKWGDDLGGTMRLGGQPCRLKIDSLARRLYGEDRVIERHRHRYEVNNDLIGELEKKGLVISGRSIDDRLVEMIELADHPWFVGCQFHPEFTSTPRKGHPLFIGFIKAGLAAKEAKKAVLAAPSQEKTD</sequence>
<proteinExistence type="inferred from homology"/>
<gene>
    <name evidence="1" type="primary">pyrG</name>
    <name type="ordered locus">COXBURSA331_A1872</name>
</gene>
<feature type="chain" id="PRO_1000139429" description="CTP synthase">
    <location>
        <begin position="1"/>
        <end position="555"/>
    </location>
</feature>
<feature type="domain" description="Glutamine amidotransferase type-1" evidence="1">
    <location>
        <begin position="290"/>
        <end position="541"/>
    </location>
</feature>
<feature type="region of interest" description="Amidoligase domain" evidence="1">
    <location>
        <begin position="1"/>
        <end position="265"/>
    </location>
</feature>
<feature type="active site" description="Nucleophile; for glutamine hydrolysis" evidence="1">
    <location>
        <position position="378"/>
    </location>
</feature>
<feature type="active site" evidence="1">
    <location>
        <position position="514"/>
    </location>
</feature>
<feature type="active site" evidence="1">
    <location>
        <position position="516"/>
    </location>
</feature>
<feature type="binding site" evidence="1">
    <location>
        <position position="13"/>
    </location>
    <ligand>
        <name>CTP</name>
        <dbReference type="ChEBI" id="CHEBI:37563"/>
        <note>allosteric inhibitor</note>
    </ligand>
</feature>
<feature type="binding site" evidence="1">
    <location>
        <position position="13"/>
    </location>
    <ligand>
        <name>UTP</name>
        <dbReference type="ChEBI" id="CHEBI:46398"/>
    </ligand>
</feature>
<feature type="binding site" evidence="1">
    <location>
        <begin position="14"/>
        <end position="19"/>
    </location>
    <ligand>
        <name>ATP</name>
        <dbReference type="ChEBI" id="CHEBI:30616"/>
    </ligand>
</feature>
<feature type="binding site" evidence="1">
    <location>
        <position position="71"/>
    </location>
    <ligand>
        <name>ATP</name>
        <dbReference type="ChEBI" id="CHEBI:30616"/>
    </ligand>
</feature>
<feature type="binding site" evidence="1">
    <location>
        <position position="71"/>
    </location>
    <ligand>
        <name>Mg(2+)</name>
        <dbReference type="ChEBI" id="CHEBI:18420"/>
    </ligand>
</feature>
<feature type="binding site" evidence="1">
    <location>
        <position position="139"/>
    </location>
    <ligand>
        <name>Mg(2+)</name>
        <dbReference type="ChEBI" id="CHEBI:18420"/>
    </ligand>
</feature>
<feature type="binding site" evidence="1">
    <location>
        <begin position="146"/>
        <end position="148"/>
    </location>
    <ligand>
        <name>CTP</name>
        <dbReference type="ChEBI" id="CHEBI:37563"/>
        <note>allosteric inhibitor</note>
    </ligand>
</feature>
<feature type="binding site" evidence="1">
    <location>
        <begin position="186"/>
        <end position="191"/>
    </location>
    <ligand>
        <name>CTP</name>
        <dbReference type="ChEBI" id="CHEBI:37563"/>
        <note>allosteric inhibitor</note>
    </ligand>
</feature>
<feature type="binding site" evidence="1">
    <location>
        <begin position="186"/>
        <end position="191"/>
    </location>
    <ligand>
        <name>UTP</name>
        <dbReference type="ChEBI" id="CHEBI:46398"/>
    </ligand>
</feature>
<feature type="binding site" evidence="1">
    <location>
        <position position="222"/>
    </location>
    <ligand>
        <name>CTP</name>
        <dbReference type="ChEBI" id="CHEBI:37563"/>
        <note>allosteric inhibitor</note>
    </ligand>
</feature>
<feature type="binding site" evidence="1">
    <location>
        <position position="222"/>
    </location>
    <ligand>
        <name>UTP</name>
        <dbReference type="ChEBI" id="CHEBI:46398"/>
    </ligand>
</feature>
<feature type="binding site" evidence="1">
    <location>
        <position position="351"/>
    </location>
    <ligand>
        <name>L-glutamine</name>
        <dbReference type="ChEBI" id="CHEBI:58359"/>
    </ligand>
</feature>
<feature type="binding site" evidence="1">
    <location>
        <begin position="379"/>
        <end position="382"/>
    </location>
    <ligand>
        <name>L-glutamine</name>
        <dbReference type="ChEBI" id="CHEBI:58359"/>
    </ligand>
</feature>
<feature type="binding site" evidence="1">
    <location>
        <position position="402"/>
    </location>
    <ligand>
        <name>L-glutamine</name>
        <dbReference type="ChEBI" id="CHEBI:58359"/>
    </ligand>
</feature>
<feature type="binding site" evidence="1">
    <location>
        <position position="469"/>
    </location>
    <ligand>
        <name>L-glutamine</name>
        <dbReference type="ChEBI" id="CHEBI:58359"/>
    </ligand>
</feature>
<name>PYRG_COXBR</name>
<reference key="1">
    <citation type="submission" date="2007-11" db="EMBL/GenBank/DDBJ databases">
        <title>Genome sequencing of phylogenetically and phenotypically diverse Coxiella burnetii isolates.</title>
        <authorList>
            <person name="Seshadri R."/>
            <person name="Samuel J.E."/>
        </authorList>
    </citation>
    <scope>NUCLEOTIDE SEQUENCE [LARGE SCALE GENOMIC DNA]</scope>
    <source>
        <strain>RSA 331 / Henzerling II</strain>
    </source>
</reference>
<dbReference type="EC" id="6.3.4.2" evidence="1"/>
<dbReference type="EMBL" id="CP000890">
    <property type="protein sequence ID" value="ABX78980.1"/>
    <property type="molecule type" value="Genomic_DNA"/>
</dbReference>
<dbReference type="RefSeq" id="WP_012220750.1">
    <property type="nucleotide sequence ID" value="NC_010117.1"/>
</dbReference>
<dbReference type="SMR" id="A9N9V5"/>
<dbReference type="MEROPS" id="C26.964"/>
<dbReference type="KEGG" id="cbs:COXBURSA331_A1872"/>
<dbReference type="HOGENOM" id="CLU_011675_5_0_6"/>
<dbReference type="UniPathway" id="UPA00159">
    <property type="reaction ID" value="UER00277"/>
</dbReference>
<dbReference type="GO" id="GO:0005829">
    <property type="term" value="C:cytosol"/>
    <property type="evidence" value="ECO:0007669"/>
    <property type="project" value="TreeGrafter"/>
</dbReference>
<dbReference type="GO" id="GO:0005524">
    <property type="term" value="F:ATP binding"/>
    <property type="evidence" value="ECO:0007669"/>
    <property type="project" value="UniProtKB-KW"/>
</dbReference>
<dbReference type="GO" id="GO:0003883">
    <property type="term" value="F:CTP synthase activity"/>
    <property type="evidence" value="ECO:0007669"/>
    <property type="project" value="UniProtKB-UniRule"/>
</dbReference>
<dbReference type="GO" id="GO:0004359">
    <property type="term" value="F:glutaminase activity"/>
    <property type="evidence" value="ECO:0007669"/>
    <property type="project" value="RHEA"/>
</dbReference>
<dbReference type="GO" id="GO:0042802">
    <property type="term" value="F:identical protein binding"/>
    <property type="evidence" value="ECO:0007669"/>
    <property type="project" value="TreeGrafter"/>
</dbReference>
<dbReference type="GO" id="GO:0046872">
    <property type="term" value="F:metal ion binding"/>
    <property type="evidence" value="ECO:0007669"/>
    <property type="project" value="UniProtKB-KW"/>
</dbReference>
<dbReference type="GO" id="GO:0044210">
    <property type="term" value="P:'de novo' CTP biosynthetic process"/>
    <property type="evidence" value="ECO:0007669"/>
    <property type="project" value="UniProtKB-UniRule"/>
</dbReference>
<dbReference type="GO" id="GO:0019856">
    <property type="term" value="P:pyrimidine nucleobase biosynthetic process"/>
    <property type="evidence" value="ECO:0007669"/>
    <property type="project" value="TreeGrafter"/>
</dbReference>
<dbReference type="CDD" id="cd03113">
    <property type="entry name" value="CTPS_N"/>
    <property type="match status" value="1"/>
</dbReference>
<dbReference type="CDD" id="cd01746">
    <property type="entry name" value="GATase1_CTP_Synthase"/>
    <property type="match status" value="1"/>
</dbReference>
<dbReference type="FunFam" id="3.40.50.300:FF:000009">
    <property type="entry name" value="CTP synthase"/>
    <property type="match status" value="1"/>
</dbReference>
<dbReference type="FunFam" id="3.40.50.880:FF:000002">
    <property type="entry name" value="CTP synthase"/>
    <property type="match status" value="1"/>
</dbReference>
<dbReference type="Gene3D" id="3.40.50.880">
    <property type="match status" value="1"/>
</dbReference>
<dbReference type="Gene3D" id="3.40.50.300">
    <property type="entry name" value="P-loop containing nucleotide triphosphate hydrolases"/>
    <property type="match status" value="1"/>
</dbReference>
<dbReference type="HAMAP" id="MF_01227">
    <property type="entry name" value="PyrG"/>
    <property type="match status" value="1"/>
</dbReference>
<dbReference type="InterPro" id="IPR029062">
    <property type="entry name" value="Class_I_gatase-like"/>
</dbReference>
<dbReference type="InterPro" id="IPR004468">
    <property type="entry name" value="CTP_synthase"/>
</dbReference>
<dbReference type="InterPro" id="IPR017456">
    <property type="entry name" value="CTP_synthase_N"/>
</dbReference>
<dbReference type="InterPro" id="IPR017926">
    <property type="entry name" value="GATASE"/>
</dbReference>
<dbReference type="InterPro" id="IPR033828">
    <property type="entry name" value="GATase1_CTP_Synthase"/>
</dbReference>
<dbReference type="InterPro" id="IPR027417">
    <property type="entry name" value="P-loop_NTPase"/>
</dbReference>
<dbReference type="NCBIfam" id="NF003792">
    <property type="entry name" value="PRK05380.1"/>
    <property type="match status" value="1"/>
</dbReference>
<dbReference type="NCBIfam" id="TIGR00337">
    <property type="entry name" value="PyrG"/>
    <property type="match status" value="1"/>
</dbReference>
<dbReference type="PANTHER" id="PTHR11550">
    <property type="entry name" value="CTP SYNTHASE"/>
    <property type="match status" value="1"/>
</dbReference>
<dbReference type="PANTHER" id="PTHR11550:SF0">
    <property type="entry name" value="CTP SYNTHASE-RELATED"/>
    <property type="match status" value="1"/>
</dbReference>
<dbReference type="Pfam" id="PF06418">
    <property type="entry name" value="CTP_synth_N"/>
    <property type="match status" value="1"/>
</dbReference>
<dbReference type="Pfam" id="PF00117">
    <property type="entry name" value="GATase"/>
    <property type="match status" value="1"/>
</dbReference>
<dbReference type="SUPFAM" id="SSF52317">
    <property type="entry name" value="Class I glutamine amidotransferase-like"/>
    <property type="match status" value="1"/>
</dbReference>
<dbReference type="SUPFAM" id="SSF52540">
    <property type="entry name" value="P-loop containing nucleoside triphosphate hydrolases"/>
    <property type="match status" value="1"/>
</dbReference>
<dbReference type="PROSITE" id="PS51273">
    <property type="entry name" value="GATASE_TYPE_1"/>
    <property type="match status" value="1"/>
</dbReference>
<comment type="function">
    <text evidence="1">Catalyzes the ATP-dependent amination of UTP to CTP with either L-glutamine or ammonia as the source of nitrogen. Regulates intracellular CTP levels through interactions with the four ribonucleotide triphosphates.</text>
</comment>
<comment type="catalytic activity">
    <reaction evidence="1">
        <text>UTP + L-glutamine + ATP + H2O = CTP + L-glutamate + ADP + phosphate + 2 H(+)</text>
        <dbReference type="Rhea" id="RHEA:26426"/>
        <dbReference type="ChEBI" id="CHEBI:15377"/>
        <dbReference type="ChEBI" id="CHEBI:15378"/>
        <dbReference type="ChEBI" id="CHEBI:29985"/>
        <dbReference type="ChEBI" id="CHEBI:30616"/>
        <dbReference type="ChEBI" id="CHEBI:37563"/>
        <dbReference type="ChEBI" id="CHEBI:43474"/>
        <dbReference type="ChEBI" id="CHEBI:46398"/>
        <dbReference type="ChEBI" id="CHEBI:58359"/>
        <dbReference type="ChEBI" id="CHEBI:456216"/>
        <dbReference type="EC" id="6.3.4.2"/>
    </reaction>
</comment>
<comment type="catalytic activity">
    <reaction evidence="1">
        <text>L-glutamine + H2O = L-glutamate + NH4(+)</text>
        <dbReference type="Rhea" id="RHEA:15889"/>
        <dbReference type="ChEBI" id="CHEBI:15377"/>
        <dbReference type="ChEBI" id="CHEBI:28938"/>
        <dbReference type="ChEBI" id="CHEBI:29985"/>
        <dbReference type="ChEBI" id="CHEBI:58359"/>
    </reaction>
</comment>
<comment type="catalytic activity">
    <reaction evidence="1">
        <text>UTP + NH4(+) + ATP = CTP + ADP + phosphate + 2 H(+)</text>
        <dbReference type="Rhea" id="RHEA:16597"/>
        <dbReference type="ChEBI" id="CHEBI:15378"/>
        <dbReference type="ChEBI" id="CHEBI:28938"/>
        <dbReference type="ChEBI" id="CHEBI:30616"/>
        <dbReference type="ChEBI" id="CHEBI:37563"/>
        <dbReference type="ChEBI" id="CHEBI:43474"/>
        <dbReference type="ChEBI" id="CHEBI:46398"/>
        <dbReference type="ChEBI" id="CHEBI:456216"/>
    </reaction>
</comment>
<comment type="activity regulation">
    <text evidence="1">Allosterically activated by GTP, when glutamine is the substrate; GTP has no effect on the reaction when ammonia is the substrate. The allosteric effector GTP functions by stabilizing the protein conformation that binds the tetrahedral intermediate(s) formed during glutamine hydrolysis. Inhibited by the product CTP, via allosteric rather than competitive inhibition.</text>
</comment>
<comment type="pathway">
    <text evidence="1">Pyrimidine metabolism; CTP biosynthesis via de novo pathway; CTP from UDP: step 2/2.</text>
</comment>
<comment type="subunit">
    <text evidence="1">Homotetramer.</text>
</comment>
<comment type="miscellaneous">
    <text evidence="1">CTPSs have evolved a hybrid strategy for distinguishing between UTP and CTP. The overlapping regions of the product feedback inhibitory and substrate sites recognize a common feature in both compounds, the triphosphate moiety. To differentiate isosteric substrate and product pyrimidine rings, an additional pocket far from the expected kinase/ligase catalytic site, specifically recognizes the cytosine and ribose portions of the product inhibitor.</text>
</comment>
<comment type="similarity">
    <text evidence="1">Belongs to the CTP synthase family.</text>
</comment>
<evidence type="ECO:0000255" key="1">
    <source>
        <dbReference type="HAMAP-Rule" id="MF_01227"/>
    </source>
</evidence>
<accession>A9N9V5</accession>
<keyword id="KW-0067">ATP-binding</keyword>
<keyword id="KW-0315">Glutamine amidotransferase</keyword>
<keyword id="KW-0436">Ligase</keyword>
<keyword id="KW-0460">Magnesium</keyword>
<keyword id="KW-0479">Metal-binding</keyword>
<keyword id="KW-0547">Nucleotide-binding</keyword>
<keyword id="KW-0665">Pyrimidine biosynthesis</keyword>
<organism>
    <name type="scientific">Coxiella burnetii (strain RSA 331 / Henzerling II)</name>
    <dbReference type="NCBI Taxonomy" id="360115"/>
    <lineage>
        <taxon>Bacteria</taxon>
        <taxon>Pseudomonadati</taxon>
        <taxon>Pseudomonadota</taxon>
        <taxon>Gammaproteobacteria</taxon>
        <taxon>Legionellales</taxon>
        <taxon>Coxiellaceae</taxon>
        <taxon>Coxiella</taxon>
    </lineage>
</organism>
<protein>
    <recommendedName>
        <fullName evidence="1">CTP synthase</fullName>
        <ecNumber evidence="1">6.3.4.2</ecNumber>
    </recommendedName>
    <alternativeName>
        <fullName evidence="1">Cytidine 5'-triphosphate synthase</fullName>
    </alternativeName>
    <alternativeName>
        <fullName evidence="1">Cytidine triphosphate synthetase</fullName>
        <shortName evidence="1">CTP synthetase</shortName>
        <shortName evidence="1">CTPS</shortName>
    </alternativeName>
    <alternativeName>
        <fullName evidence="1">UTP--ammonia ligase</fullName>
    </alternativeName>
</protein>